<sequence length="444" mass="49330">MSSTSPNLQKAIDLASKAAQEDKAGNYEEALQLYQHAVQYFLHVVKYEAQGDKAKQSIRAQCTEYLDRAEKLKEYLKNKEKKAQKPVKEGQPSPADEKGNDSDGEGESDDPEKKKLQNQLQGAIVIERPNVKWSDVAGLEGAKEALKEAVILPIKFPHLFTGKRTPWRGILLFGPPGTGKSYLAKAVATEANNSTFFSISSSDLVSKWLGESEKLVKNLFQLARENKPSIIFIDEIDSLCGSRSENESEAARRIKTEFLVQMRGVGVDNDGILVLGATNIPWVLDSAIRRRFEKRIYIPLPEPHARAAMFKLHLGTTQNSLTEADFRELGRKTDGYSGADISIIVRDALMQPVRKVQSATHFKKVRGPSRADPNHLVDDLLTPCSPGDPGAIEMTWMDVPGDKLLEPVVSMSDMLRSLSNTKPTVNEHDLLKLKKFTEDFGQEG</sequence>
<accession>Q5R658</accession>
<dbReference type="EC" id="3.6.4.6"/>
<dbReference type="EMBL" id="CR860638">
    <property type="protein sequence ID" value="CAH92758.1"/>
    <property type="molecule type" value="mRNA"/>
</dbReference>
<dbReference type="RefSeq" id="NP_001126608.1">
    <property type="nucleotide sequence ID" value="NM_001133136.1"/>
</dbReference>
<dbReference type="SMR" id="Q5R658"/>
<dbReference type="STRING" id="9601.ENSPPYP00000010341"/>
<dbReference type="GeneID" id="100173605"/>
<dbReference type="KEGG" id="pon:100173605"/>
<dbReference type="CTD" id="9525"/>
<dbReference type="eggNOG" id="KOG0739">
    <property type="taxonomic scope" value="Eukaryota"/>
</dbReference>
<dbReference type="InParanoid" id="Q5R658"/>
<dbReference type="OrthoDB" id="29072at2759"/>
<dbReference type="Proteomes" id="UP000001595">
    <property type="component" value="Unplaced"/>
</dbReference>
<dbReference type="GO" id="GO:0031902">
    <property type="term" value="C:late endosome membrane"/>
    <property type="evidence" value="ECO:0007669"/>
    <property type="project" value="UniProtKB-SubCell"/>
</dbReference>
<dbReference type="GO" id="GO:0005524">
    <property type="term" value="F:ATP binding"/>
    <property type="evidence" value="ECO:0007669"/>
    <property type="project" value="UniProtKB-KW"/>
</dbReference>
<dbReference type="GO" id="GO:0016887">
    <property type="term" value="F:ATP hydrolysis activity"/>
    <property type="evidence" value="ECO:0007669"/>
    <property type="project" value="InterPro"/>
</dbReference>
<dbReference type="GO" id="GO:0051301">
    <property type="term" value="P:cell division"/>
    <property type="evidence" value="ECO:0007669"/>
    <property type="project" value="UniProtKB-KW"/>
</dbReference>
<dbReference type="GO" id="GO:0016197">
    <property type="term" value="P:endosomal transport"/>
    <property type="evidence" value="ECO:0007669"/>
    <property type="project" value="TreeGrafter"/>
</dbReference>
<dbReference type="GO" id="GO:0015031">
    <property type="term" value="P:protein transport"/>
    <property type="evidence" value="ECO:0007669"/>
    <property type="project" value="UniProtKB-KW"/>
</dbReference>
<dbReference type="GO" id="GO:0007033">
    <property type="term" value="P:vacuole organization"/>
    <property type="evidence" value="ECO:0007669"/>
    <property type="project" value="TreeGrafter"/>
</dbReference>
<dbReference type="CDD" id="cd02678">
    <property type="entry name" value="MIT_VPS4"/>
    <property type="match status" value="1"/>
</dbReference>
<dbReference type="CDD" id="cd19521">
    <property type="entry name" value="RecA-like_VPS4"/>
    <property type="match status" value="1"/>
</dbReference>
<dbReference type="FunFam" id="3.40.50.300:FF:000043">
    <property type="entry name" value="Vacuolar protein sorting-associated protein 4"/>
    <property type="match status" value="1"/>
</dbReference>
<dbReference type="FunFam" id="1.20.58.80:FF:000002">
    <property type="entry name" value="Vacuolar protein sorting-associated protein 4A"/>
    <property type="match status" value="1"/>
</dbReference>
<dbReference type="FunFam" id="1.10.8.60:FF:000015">
    <property type="entry name" value="vacuolar protein sorting-associated protein 4A"/>
    <property type="match status" value="1"/>
</dbReference>
<dbReference type="Gene3D" id="1.10.8.60">
    <property type="match status" value="1"/>
</dbReference>
<dbReference type="Gene3D" id="3.40.50.300">
    <property type="entry name" value="P-loop containing nucleotide triphosphate hydrolases"/>
    <property type="match status" value="1"/>
</dbReference>
<dbReference type="Gene3D" id="1.20.58.80">
    <property type="entry name" value="Phosphotransferase system, lactose/cellobiose-type IIA subunit"/>
    <property type="match status" value="1"/>
</dbReference>
<dbReference type="InterPro" id="IPR003593">
    <property type="entry name" value="AAA+_ATPase"/>
</dbReference>
<dbReference type="InterPro" id="IPR041569">
    <property type="entry name" value="AAA_lid_3"/>
</dbReference>
<dbReference type="InterPro" id="IPR003959">
    <property type="entry name" value="ATPase_AAA_core"/>
</dbReference>
<dbReference type="InterPro" id="IPR003960">
    <property type="entry name" value="ATPase_AAA_CS"/>
</dbReference>
<dbReference type="InterPro" id="IPR007330">
    <property type="entry name" value="MIT_dom"/>
</dbReference>
<dbReference type="InterPro" id="IPR036181">
    <property type="entry name" value="MIT_dom_sf"/>
</dbReference>
<dbReference type="InterPro" id="IPR050304">
    <property type="entry name" value="MT-severing_AAA_ATPase"/>
</dbReference>
<dbReference type="InterPro" id="IPR027417">
    <property type="entry name" value="P-loop_NTPase"/>
</dbReference>
<dbReference type="InterPro" id="IPR015415">
    <property type="entry name" value="Spast_Vps4_C"/>
</dbReference>
<dbReference type="InterPro" id="IPR045253">
    <property type="entry name" value="VPS4_MIT"/>
</dbReference>
<dbReference type="PANTHER" id="PTHR23074">
    <property type="entry name" value="AAA DOMAIN-CONTAINING"/>
    <property type="match status" value="1"/>
</dbReference>
<dbReference type="PANTHER" id="PTHR23074:SF72">
    <property type="entry name" value="VACUOLAR PROTEIN SORTING-ASSOCIATED PROTEIN 4B"/>
    <property type="match status" value="1"/>
</dbReference>
<dbReference type="Pfam" id="PF00004">
    <property type="entry name" value="AAA"/>
    <property type="match status" value="1"/>
</dbReference>
<dbReference type="Pfam" id="PF17862">
    <property type="entry name" value="AAA_lid_3"/>
    <property type="match status" value="1"/>
</dbReference>
<dbReference type="Pfam" id="PF04212">
    <property type="entry name" value="MIT"/>
    <property type="match status" value="1"/>
</dbReference>
<dbReference type="Pfam" id="PF09336">
    <property type="entry name" value="Vps4_C"/>
    <property type="match status" value="1"/>
</dbReference>
<dbReference type="SMART" id="SM00382">
    <property type="entry name" value="AAA"/>
    <property type="match status" value="1"/>
</dbReference>
<dbReference type="SMART" id="SM00745">
    <property type="entry name" value="MIT"/>
    <property type="match status" value="1"/>
</dbReference>
<dbReference type="SUPFAM" id="SSF116846">
    <property type="entry name" value="MIT domain"/>
    <property type="match status" value="1"/>
</dbReference>
<dbReference type="SUPFAM" id="SSF52540">
    <property type="entry name" value="P-loop containing nucleoside triphosphate hydrolases"/>
    <property type="match status" value="1"/>
</dbReference>
<dbReference type="PROSITE" id="PS00674">
    <property type="entry name" value="AAA"/>
    <property type="match status" value="1"/>
</dbReference>
<feature type="chain" id="PRO_0000331379" description="Vacuolar protein sorting-associated protein 4B">
    <location>
        <begin position="1"/>
        <end position="444"/>
    </location>
</feature>
<feature type="domain" description="MIT">
    <location>
        <begin position="4"/>
        <end position="82"/>
    </location>
</feature>
<feature type="region of interest" description="Disordered" evidence="4">
    <location>
        <begin position="78"/>
        <end position="117"/>
    </location>
</feature>
<feature type="coiled-coil region" evidence="3">
    <location>
        <begin position="19"/>
        <end position="82"/>
    </location>
</feature>
<feature type="compositionally biased region" description="Basic and acidic residues" evidence="4">
    <location>
        <begin position="78"/>
        <end position="88"/>
    </location>
</feature>
<feature type="binding site" evidence="3">
    <location>
        <begin position="174"/>
        <end position="181"/>
    </location>
    <ligand>
        <name>ATP</name>
        <dbReference type="ChEBI" id="CHEBI:30616"/>
    </ligand>
</feature>
<feature type="modified residue" description="Phosphoserine" evidence="1">
    <location>
        <position position="93"/>
    </location>
</feature>
<feature type="modified residue" description="Phosphoserine" evidence="1">
    <location>
        <position position="102"/>
    </location>
</feature>
<feature type="modified residue" description="Phosphoserine" evidence="1">
    <location>
        <position position="108"/>
    </location>
</feature>
<feature type="modified residue" description="Phosphoserine" evidence="1">
    <location>
        <position position="410"/>
    </location>
</feature>
<name>VPS4B_PONAB</name>
<evidence type="ECO:0000250" key="1">
    <source>
        <dbReference type="UniProtKB" id="O75351"/>
    </source>
</evidence>
<evidence type="ECO:0000250" key="2">
    <source>
        <dbReference type="UniProtKB" id="P46467"/>
    </source>
</evidence>
<evidence type="ECO:0000255" key="3"/>
<evidence type="ECO:0000256" key="4">
    <source>
        <dbReference type="SAM" id="MobiDB-lite"/>
    </source>
</evidence>
<evidence type="ECO:0000305" key="5"/>
<protein>
    <recommendedName>
        <fullName>Vacuolar protein sorting-associated protein 4B</fullName>
        <ecNumber>3.6.4.6</ecNumber>
    </recommendedName>
</protein>
<reference key="1">
    <citation type="submission" date="2004-11" db="EMBL/GenBank/DDBJ databases">
        <authorList>
            <consortium name="The German cDNA consortium"/>
        </authorList>
    </citation>
    <scope>NUCLEOTIDE SEQUENCE [LARGE SCALE MRNA]</scope>
    <source>
        <tissue>Brain cortex</tissue>
    </source>
</reference>
<keyword id="KW-0067">ATP-binding</keyword>
<keyword id="KW-0131">Cell cycle</keyword>
<keyword id="KW-0132">Cell division</keyword>
<keyword id="KW-0175">Coiled coil</keyword>
<keyword id="KW-0967">Endosome</keyword>
<keyword id="KW-0378">Hydrolase</keyword>
<keyword id="KW-0472">Membrane</keyword>
<keyword id="KW-0547">Nucleotide-binding</keyword>
<keyword id="KW-0597">Phosphoprotein</keyword>
<keyword id="KW-0653">Protein transport</keyword>
<keyword id="KW-1185">Reference proteome</keyword>
<keyword id="KW-0813">Transport</keyword>
<proteinExistence type="evidence at transcript level"/>
<gene>
    <name type="primary">VPS4B</name>
</gene>
<organism>
    <name type="scientific">Pongo abelii</name>
    <name type="common">Sumatran orangutan</name>
    <name type="synonym">Pongo pygmaeus abelii</name>
    <dbReference type="NCBI Taxonomy" id="9601"/>
    <lineage>
        <taxon>Eukaryota</taxon>
        <taxon>Metazoa</taxon>
        <taxon>Chordata</taxon>
        <taxon>Craniata</taxon>
        <taxon>Vertebrata</taxon>
        <taxon>Euteleostomi</taxon>
        <taxon>Mammalia</taxon>
        <taxon>Eutheria</taxon>
        <taxon>Euarchontoglires</taxon>
        <taxon>Primates</taxon>
        <taxon>Haplorrhini</taxon>
        <taxon>Catarrhini</taxon>
        <taxon>Hominidae</taxon>
        <taxon>Pongo</taxon>
    </lineage>
</organism>
<comment type="function">
    <text evidence="1">Involved in late steps of the endosomal multivesicular bodies (MVB) pathway. Recognizes membrane-associated ESCRT-III assemblies and catalyzes their disassembly, possibly in combination with membrane fission. Redistributes the ESCRT-III components to the cytoplasm for further rounds of MVB sorting. MVBs contain intraluminal vesicles (ILVs) that are generated by invagination and scission from the limiting membrane of the endosome and mostly are delivered to lysosomes enabling degradation of membrane proteins, such as stimulated growth factor receptors, lysosomal enzymes and lipids. VPS4A/B are required for the exosomal release of SDCBP, CD63 and syndecan (By similarity).</text>
</comment>
<comment type="function">
    <text evidence="1">(Microbial infection) In conjunction with the ESCRT machinery also appears to function in topologically equivalent membrane fission events, such as the terminal stages of cytokinesis and enveloped virus budding (lentiviruses).</text>
</comment>
<comment type="catalytic activity">
    <reaction>
        <text>ATP + H2O = ADP + phosphate + H(+)</text>
        <dbReference type="Rhea" id="RHEA:13065"/>
        <dbReference type="ChEBI" id="CHEBI:15377"/>
        <dbReference type="ChEBI" id="CHEBI:15378"/>
        <dbReference type="ChEBI" id="CHEBI:30616"/>
        <dbReference type="ChEBI" id="CHEBI:43474"/>
        <dbReference type="ChEBI" id="CHEBI:456216"/>
        <dbReference type="EC" id="3.6.4.6"/>
    </reaction>
</comment>
<comment type="subunit">
    <text evidence="1">Proposed to be monomeric or homodimeric in nucleotide-free form and to oligomerize upon binding to ATP to form two stacked hexameric or heptameric rings with a central pore through which ESCRT-III substrates are translocated in an ATP-dependent manner. In vitro, associates on the inside of a helical tubular structure formed by a CHMP2A-CHMP3 polymer. Interacts with CHMP1A, CHMP1B, CHMP2A, CHMP4B and CHMP6. Interacts with VPS4A; the interaction suggests a heteromeric assembly with VPS4A. Interacts with VTA1 (By similarity).</text>
</comment>
<comment type="subcellular location">
    <subcellularLocation>
        <location evidence="2">Late endosome membrane</location>
        <topology evidence="2">Peripheral membrane protein</topology>
    </subcellularLocation>
    <text evidence="2">Membrane-associated in the prevacuolar endosomal compartment.</text>
</comment>
<comment type="domain">
    <text evidence="1">The MIT domain serves as an adapter for ESCRT-III proteins. It forms an asymmetric three-helix bundle that binds amphipathic MIM (MIT interacting motif) helices along the groove between MIT helices 2 and 3 present in a subset of ESCRT-III proteins thus establishing the canonical MIM-MIT interaction. In an extended conformation along the groove between helices 1 and 3, also binds to a type-2 MIT interacting motif (MIM2).</text>
</comment>
<comment type="similarity">
    <text evidence="5">Belongs to the AAA ATPase family.</text>
</comment>